<keyword id="KW-0326">Glycosidase</keyword>
<keyword id="KW-0378">Hydrolase</keyword>
<keyword id="KW-0677">Repeat</keyword>
<keyword id="KW-0732">Signal</keyword>
<feature type="signal peptide" evidence="2">
    <location>
        <begin position="1"/>
        <end position="19"/>
    </location>
</feature>
<feature type="chain" id="PRO_0000012175" description="Mannan endo-1,4-beta-mannosidase B">
    <location>
        <begin position="20"/>
        <end position="571"/>
    </location>
</feature>
<feature type="domain" description="CBM6" evidence="3">
    <location>
        <begin position="22"/>
        <end position="141"/>
    </location>
</feature>
<feature type="domain" description="GH26" evidence="5">
    <location>
        <begin position="165"/>
        <end position="459"/>
    </location>
</feature>
<feature type="domain" description="CBM10 1" evidence="4">
    <location>
        <begin position="491"/>
        <end position="527"/>
    </location>
</feature>
<feature type="domain" description="CBM10 2" evidence="4">
    <location>
        <begin position="534"/>
        <end position="571"/>
    </location>
</feature>
<feature type="active site" description="Proton donor" evidence="5">
    <location>
        <position position="319"/>
    </location>
</feature>
<feature type="active site" description="Nucleophile" evidence="5">
    <location>
        <position position="407"/>
    </location>
</feature>
<feature type="binding site" evidence="1">
    <location>
        <position position="286"/>
    </location>
    <ligand>
        <name>substrate</name>
    </ligand>
</feature>
<feature type="binding site" evidence="1">
    <location>
        <position position="324"/>
    </location>
    <ligand>
        <name>substrate</name>
    </ligand>
</feature>
<feature type="binding site" evidence="1">
    <location>
        <position position="379"/>
    </location>
    <ligand>
        <name>substrate</name>
    </ligand>
</feature>
<comment type="catalytic activity">
    <reaction>
        <text>Random hydrolysis of (1-&gt;4)-beta-D-mannosidic linkages in mannans, galactomannans and glucomannans.</text>
        <dbReference type="EC" id="3.2.1.78"/>
    </reaction>
</comment>
<comment type="similarity">
    <text evidence="5 6">Belongs to the glycosyl hydrolase 26 family.</text>
</comment>
<evidence type="ECO:0000250" key="1">
    <source>
        <dbReference type="UniProtKB" id="B4XC07"/>
    </source>
</evidence>
<evidence type="ECO:0000255" key="2"/>
<evidence type="ECO:0000255" key="3">
    <source>
        <dbReference type="PROSITE-ProRule" id="PRU00523"/>
    </source>
</evidence>
<evidence type="ECO:0000255" key="4">
    <source>
        <dbReference type="PROSITE-ProRule" id="PRU01099"/>
    </source>
</evidence>
<evidence type="ECO:0000255" key="5">
    <source>
        <dbReference type="PROSITE-ProRule" id="PRU01100"/>
    </source>
</evidence>
<evidence type="ECO:0000305" key="6"/>
<reference key="1">
    <citation type="journal article" date="1996" name="FEMS Microbiol. Lett.">
        <title>Evidence that the Piromyces gene family encoding endo-1,4-mannanases arose through gene duplication.</title>
        <authorList>
            <person name="Millward-Sadler S.J."/>
            <person name="Hall J."/>
            <person name="Black G.W."/>
            <person name="Hazlewood G.P."/>
            <person name="Gilbert H.J."/>
        </authorList>
    </citation>
    <scope>NUCLEOTIDE SEQUENCE [MRNA]</scope>
</reference>
<accession>P55297</accession>
<name>MANB_PIRSP</name>
<protein>
    <recommendedName>
        <fullName>Mannan endo-1,4-beta-mannosidase B</fullName>
        <ecNumber>3.2.1.78</ecNumber>
    </recommendedName>
    <alternativeName>
        <fullName>1,4-beta-D-mannan mannanohydrolase B</fullName>
    </alternativeName>
    <alternativeName>
        <fullName>Beta-mannanase B</fullName>
    </alternativeName>
</protein>
<proteinExistence type="evidence at transcript level"/>
<dbReference type="EC" id="3.2.1.78"/>
<dbReference type="EMBL" id="X97408">
    <property type="protein sequence ID" value="CAA66061.1"/>
    <property type="molecule type" value="mRNA"/>
</dbReference>
<dbReference type="SMR" id="P55297"/>
<dbReference type="CAZy" id="CBM35">
    <property type="family name" value="Carbohydrate-Binding Module Family 35"/>
</dbReference>
<dbReference type="CAZy" id="GH26">
    <property type="family name" value="Glycoside Hydrolase Family 26"/>
</dbReference>
<dbReference type="GO" id="GO:0030246">
    <property type="term" value="F:carbohydrate binding"/>
    <property type="evidence" value="ECO:0007669"/>
    <property type="project" value="InterPro"/>
</dbReference>
<dbReference type="GO" id="GO:0016985">
    <property type="term" value="F:mannan endo-1,4-beta-mannosidase activity"/>
    <property type="evidence" value="ECO:0007669"/>
    <property type="project" value="UniProtKB-EC"/>
</dbReference>
<dbReference type="GO" id="GO:0006080">
    <property type="term" value="P:substituted mannan metabolic process"/>
    <property type="evidence" value="ECO:0007669"/>
    <property type="project" value="InterPro"/>
</dbReference>
<dbReference type="CDD" id="cd04086">
    <property type="entry name" value="CBM35_mannanase-like"/>
    <property type="match status" value="1"/>
</dbReference>
<dbReference type="Gene3D" id="3.90.1220.10">
    <property type="entry name" value="Cellulose docking domain, dockering"/>
    <property type="match status" value="2"/>
</dbReference>
<dbReference type="Gene3D" id="2.60.120.260">
    <property type="entry name" value="Galactose-binding domain-like"/>
    <property type="match status" value="1"/>
</dbReference>
<dbReference type="Gene3D" id="3.20.20.80">
    <property type="entry name" value="Glycosidases"/>
    <property type="match status" value="1"/>
</dbReference>
<dbReference type="InterPro" id="IPR002883">
    <property type="entry name" value="CBM10/Dockerin_dom"/>
</dbReference>
<dbReference type="InterPro" id="IPR005084">
    <property type="entry name" value="CBM6"/>
</dbReference>
<dbReference type="InterPro" id="IPR009034">
    <property type="entry name" value="Dockerin_dom_fun_sf"/>
</dbReference>
<dbReference type="InterPro" id="IPR008979">
    <property type="entry name" value="Galactose-bd-like_sf"/>
</dbReference>
<dbReference type="InterPro" id="IPR022790">
    <property type="entry name" value="GH26_dom"/>
</dbReference>
<dbReference type="InterPro" id="IPR000805">
    <property type="entry name" value="Glyco_hydro_26"/>
</dbReference>
<dbReference type="InterPro" id="IPR017853">
    <property type="entry name" value="Glycoside_hydrolase_SF"/>
</dbReference>
<dbReference type="PANTHER" id="PTHR40079:SF4">
    <property type="entry name" value="GH26 DOMAIN-CONTAINING PROTEIN-RELATED"/>
    <property type="match status" value="1"/>
</dbReference>
<dbReference type="PANTHER" id="PTHR40079">
    <property type="entry name" value="MANNAN ENDO-1,4-BETA-MANNOSIDASE E-RELATED"/>
    <property type="match status" value="1"/>
</dbReference>
<dbReference type="Pfam" id="PF02013">
    <property type="entry name" value="CBM_10"/>
    <property type="match status" value="2"/>
</dbReference>
<dbReference type="Pfam" id="PF16990">
    <property type="entry name" value="CBM_35"/>
    <property type="match status" value="1"/>
</dbReference>
<dbReference type="Pfam" id="PF02156">
    <property type="entry name" value="Glyco_hydro_26"/>
    <property type="match status" value="1"/>
</dbReference>
<dbReference type="PRINTS" id="PR00739">
    <property type="entry name" value="GLHYDRLASE26"/>
</dbReference>
<dbReference type="SUPFAM" id="SSF51445">
    <property type="entry name" value="(Trans)glycosidases"/>
    <property type="match status" value="1"/>
</dbReference>
<dbReference type="SUPFAM" id="SSF64571">
    <property type="entry name" value="Cellulose docking domain, dockering"/>
    <property type="match status" value="2"/>
</dbReference>
<dbReference type="SUPFAM" id="SSF49785">
    <property type="entry name" value="Galactose-binding domain-like"/>
    <property type="match status" value="1"/>
</dbReference>
<dbReference type="PROSITE" id="PS51763">
    <property type="entry name" value="CBM10"/>
    <property type="match status" value="2"/>
</dbReference>
<dbReference type="PROSITE" id="PS51175">
    <property type="entry name" value="CBM6"/>
    <property type="match status" value="1"/>
</dbReference>
<dbReference type="PROSITE" id="PS51764">
    <property type="entry name" value="GH26"/>
    <property type="match status" value="1"/>
</dbReference>
<sequence>MNSLSLLLFCIFFVFSTFAKKVYYEAENGKLDGVTVYKSDLTGFSGTGYVGRFENPGNSVTVTVEVPQTGMYDLTIVYCANMGQKINSLTVNGQSAGDITFTENTKFEDLNVGAIYLNKGKNTIGLVSSWGWMWVDAFVINDAPNAAKDVTSKLNPTLINPKAIPAAKKLYDFLKTNYGKRILSGQVGAAGQAGDEGQEIQRIQKATGKLPAVWNMDFIFESNDCTWRPQNPDITEMAINWWKKYQGKGIMSAQWHWNIAGKTGDFAFYKKDTTFSIDNAVTEGTWEYEKIIKDIDRVAGHIKKLQAVNMPLIWRPLHENDGDWFWWGNNPKSCAKLWKILYERMVNYHGLNNLIWLWNGKNDANTPVDYIDIIGVDIYANDHGPQTTAYNTHFDFYGGKKMVVLSENGRIPDIQQCVDQNAWWGYFQTWNSEFILQDSYHTDAQLKEYFTHKTVMNMDELPSFNVNSYEYQSGNNNNNSSNNNNNNNSSECFSIPLGYPCCKGNTVVYTDNDGDWGVENNEWCGIGNSSSAVVCWSEALGYPCCVSSSDVYYTDNDGEWGVENGDWCGII</sequence>
<organism>
    <name type="scientific">Piromyces sp</name>
    <dbReference type="NCBI Taxonomy" id="45796"/>
    <lineage>
        <taxon>Eukaryota</taxon>
        <taxon>Fungi</taxon>
        <taxon>Fungi incertae sedis</taxon>
        <taxon>Chytridiomycota</taxon>
        <taxon>Chytridiomycota incertae sedis</taxon>
        <taxon>Neocallimastigomycetes</taxon>
        <taxon>Neocallimastigales</taxon>
        <taxon>Neocallimastigaceae</taxon>
        <taxon>Piromyces</taxon>
    </lineage>
</organism>
<gene>
    <name type="primary">MANB</name>
</gene>